<comment type="function">
    <text evidence="5">Beta-glycosidase that catalyzes the transfer of glucose moiety to anthocyanidin 3-glucoside at the 5 position. Anthocyanins are ubiquitous colored pigments that are responsible for variations in petal color. Uses acyl-glucoses, but not UDP-glucose, as the glucose donor.</text>
</comment>
<comment type="catalytic activity">
    <reaction evidence="5">
        <text>cyanidin 3-O-beta-D-glucoside + 1-O-(trans-sinapoyl)-beta-D-glucose = cyanidin 3,5-di-O-beta-D-glucoside + (E)-sinapate</text>
        <dbReference type="Rhea" id="RHEA:35427"/>
        <dbReference type="ChEBI" id="CHEBI:16546"/>
        <dbReference type="ChEBI" id="CHEBI:30023"/>
        <dbReference type="ChEBI" id="CHEBI:71511"/>
        <dbReference type="ChEBI" id="CHEBI:77857"/>
        <dbReference type="EC" id="2.4.1.299"/>
    </reaction>
</comment>
<comment type="biophysicochemical properties">
    <kinetics>
        <KM evidence="5">13 mM for cyanidin 3-glucopyranoside (with native enzyme at pH 5.0 and 30 degrees Celsius)</KM>
        <KM evidence="5">46.5 mM for 1-O-beta-D-vanillyl-glucose (with native enzyme at pH 5.0 and 30 degrees Celsius)</KM>
        <KM evidence="5">6.5 mM for cyanidin 3-glucopyranoside (with recombinant enzyme at pH 5.0 and 30 degrees Celsius)</KM>
        <KM evidence="5">51.9 mM for 1-O-beta-D-vanillyl-glucose (with recombinant enzyme at pH 5.0 and 30 degrees Celsius)</KM>
        <text>kcat is 0.06 sec(-1) with cyanidin 3-glucopyranoside (with native enzyme at pH 5.0 and 30 degrees Celsius). kcat is 0.01 sec(-1) with 1-O-beta-D-vanillyl-glucose (with native enzyme at pH 5.0 and 30 degrees Celsius). kcat is 0.07 sec(-1) with cyanidin 3-glucopyranoside (with recombinant enzyme at pH 5.0 and 30 degrees Celsius). kcat is 0.01 sec(-1) with 1-O-beta-D-vanillyl-glucose (with recombinant enzyme at pH 5.0 and 30 degrees Celsius).</text>
    </kinetics>
    <phDependence>
        <text evidence="5">Optimum pH is 4.5-5.0.</text>
    </phDependence>
    <temperatureDependence>
        <text evidence="5">Optimum temperature is 48 degrees Celsius.</text>
    </temperatureDependence>
</comment>
<comment type="pathway">
    <text evidence="5">Pigment biosynthesis; anthocyanin biosynthesis.</text>
</comment>
<comment type="subcellular location">
    <subcellularLocation>
        <location evidence="5">Vacuole</location>
    </subcellularLocation>
</comment>
<comment type="tissue specificity">
    <text evidence="5">Expressed in petals.</text>
</comment>
<comment type="developmental stage">
    <text evidence="5">Expression peaks at stage 2 of petal development.</text>
</comment>
<comment type="disruption phenotype">
    <text evidence="5 6">Petal color variations. Petals accumulate anthocyanin lacking the glucosyl moiety at the 5 position.</text>
</comment>
<comment type="similarity">
    <text evidence="7">Belongs to the glycosyl hydrolase 1 family.</text>
</comment>
<sequence>MNMSCKFEIVLLVSWWLLLVLVFGVESSMFSEFDRLDFPKHFIFGASSCAYQVEGAAFEDGRTLSTFDIAAHSGHLPGNGDITSDEYHKYKEDVELMVETGLDAYRFSISWSRLIPNGRGPVNPKGLEYYNNLVNALLTKGTQPHVTLLHSDLPQALRDEYGGLFISPKFIDDFVAYADVCFREFGDRVLHWTTFNEANFLAFGDENTPASALYLSAHHLLLAHASATRLYRENYQASQRGFIGINVYAYDFIPETNTEVDVIAAKRARDFFIGWFVQPLMNGEYPLTMRKNGGPRLPKFTPNETELLTGSYDFIGLNYYTAKTVKDDPVMLTVEPRNYYTDQGLISSYLGNIDPYQGHPFFNTPWGLHDVLQQFKQVYGNPPVYIHENGEVGDHDADYDKLINDIPRVEYLQGHIRAVLDAVRNGSNVKGYFVWSFLDMYELMYGTKFTFGLYYIDFNDPKLTRHPKLSQKWYSRFLKGEKASTKASIHTPNEAETHTYFY</sequence>
<organism>
    <name type="scientific">Dianthus caryophyllus</name>
    <name type="common">Carnation</name>
    <name type="synonym">Clove pink</name>
    <dbReference type="NCBI Taxonomy" id="3570"/>
    <lineage>
        <taxon>Eukaryota</taxon>
        <taxon>Viridiplantae</taxon>
        <taxon>Streptophyta</taxon>
        <taxon>Embryophyta</taxon>
        <taxon>Tracheophyta</taxon>
        <taxon>Spermatophyta</taxon>
        <taxon>Magnoliopsida</taxon>
        <taxon>eudicotyledons</taxon>
        <taxon>Gunneridae</taxon>
        <taxon>Pentapetalae</taxon>
        <taxon>Caryophyllales</taxon>
        <taxon>Caryophyllaceae</taxon>
        <taxon>Caryophylleae</taxon>
        <taxon>Dianthus</taxon>
    </lineage>
</organism>
<protein>
    <recommendedName>
        <fullName>Cyanidin 3-O-glucoside 5-O-glucosyltransferase (acyl-glucose)</fullName>
        <shortName>AA5GT</shortName>
        <shortName>Dc AA5GT</shortName>
        <ecNumber evidence="5">2.4.1.299</ecNumber>
    </recommendedName>
    <alternativeName>
        <fullName>Acyl-glucose-dependent anthocyanin 5-O-glucosytransferase</fullName>
    </alternativeName>
    <alternativeName>
        <fullName>Beta-glucosidase like protein</fullName>
        <shortName>DcBGLUL</shortName>
    </alternativeName>
</protein>
<gene>
    <name type="primary">AA5GT</name>
</gene>
<accession>E3W9M2</accession>
<evidence type="ECO:0000250" key="1">
    <source>
        <dbReference type="UniProtKB" id="Q1XH05"/>
    </source>
</evidence>
<evidence type="ECO:0000250" key="2">
    <source>
        <dbReference type="UniProtKB" id="Q7XSK0"/>
    </source>
</evidence>
<evidence type="ECO:0000250" key="3">
    <source>
        <dbReference type="UniProtKB" id="Q9SPP9"/>
    </source>
</evidence>
<evidence type="ECO:0000255" key="4">
    <source>
        <dbReference type="PROSITE-ProRule" id="PRU00498"/>
    </source>
</evidence>
<evidence type="ECO:0000269" key="5">
    <source>
    </source>
</evidence>
<evidence type="ECO:0000269" key="6">
    <source>
    </source>
</evidence>
<evidence type="ECO:0000305" key="7"/>
<reference key="1">
    <citation type="journal article" date="2010" name="Plant Cell">
        <title>A novel glucosylation reaction on anthocyanins catalyzed by acyl-glucose-dependent glucosyltransferase in the petals of carnation and delphinium.</title>
        <authorList>
            <person name="Matsuba Y."/>
            <person name="Sasaki N."/>
            <person name="Tera M."/>
            <person name="Okamura M."/>
            <person name="Abe Y."/>
            <person name="Okamoto E."/>
            <person name="Nakamura H."/>
            <person name="Funabashi H."/>
            <person name="Takatsu M."/>
            <person name="Saito M."/>
            <person name="Matsuoka H."/>
            <person name="Nagasawa K."/>
            <person name="Ozeki Y."/>
        </authorList>
    </citation>
    <scope>NUCLEOTIDE SEQUENCE [MRNA]</scope>
    <scope>PROTEIN SEQUENCE OF 31-41; 126-138; 141-152 AND 300-311</scope>
    <scope>FUNCTION</scope>
    <scope>CATALYTIC ACTIVITY</scope>
    <scope>PATHWAY</scope>
    <scope>BIOPHYSICOCHEMICAL PROPERTIES</scope>
    <scope>SUBCELLULAR LOCATION</scope>
    <scope>TISSUE SPECIFICITY</scope>
    <scope>DEVELOPMENTAL STAGE</scope>
    <scope>DISRUPTION PHENOTYPE</scope>
    <source>
        <tissue>Petal</tissue>
    </source>
</reference>
<reference key="2">
    <citation type="journal article" date="2011" name="Mol. Genet. Genomics">
        <title>Structure of the acyl-glucose-dependent anthocyanin 5-O-glucosyltransferase gene in carnations and its disruption by transposable elements in some varieties.</title>
        <authorList>
            <person name="Nishizaki Y."/>
            <person name="Matsuba Y."/>
            <person name="Okamoto E."/>
            <person name="Okamura M."/>
            <person name="Ozeki Y."/>
            <person name="Sasaki N."/>
        </authorList>
    </citation>
    <scope>NUCLEOTIDE SEQUENCE [GENOMIC DNA]</scope>
    <scope>DISRUPTION PHENOTYPE</scope>
</reference>
<proteinExistence type="evidence at protein level"/>
<feature type="signal peptide" evidence="5">
    <location>
        <begin position="1"/>
        <end position="30"/>
    </location>
</feature>
<feature type="chain" id="PRO_0000422568" description="Cyanidin 3-O-glucoside 5-O-glucosyltransferase (acyl-glucose)">
    <location>
        <begin position="31"/>
        <end position="502"/>
    </location>
</feature>
<feature type="active site" description="Proton donor" evidence="2">
    <location>
        <position position="197"/>
    </location>
</feature>
<feature type="active site" description="Nucleophile" evidence="2">
    <location>
        <position position="388"/>
    </location>
</feature>
<feature type="binding site" evidence="2">
    <location>
        <position position="52"/>
    </location>
    <ligand>
        <name>a beta-D-glucoside</name>
        <dbReference type="ChEBI" id="CHEBI:22798"/>
    </ligand>
</feature>
<feature type="binding site" evidence="2">
    <location>
        <position position="150"/>
    </location>
    <ligand>
        <name>a beta-D-glucoside</name>
        <dbReference type="ChEBI" id="CHEBI:22798"/>
    </ligand>
</feature>
<feature type="binding site" evidence="2">
    <location>
        <begin position="196"/>
        <end position="197"/>
    </location>
    <ligand>
        <name>a beta-D-glucoside</name>
        <dbReference type="ChEBI" id="CHEBI:22798"/>
    </ligand>
</feature>
<feature type="binding site" evidence="2">
    <location>
        <position position="320"/>
    </location>
    <ligand>
        <name>a beta-D-glucoside</name>
        <dbReference type="ChEBI" id="CHEBI:22798"/>
    </ligand>
</feature>
<feature type="binding site" evidence="3">
    <location>
        <position position="388"/>
    </location>
    <ligand>
        <name>a beta-D-glucoside</name>
        <dbReference type="ChEBI" id="CHEBI:22798"/>
    </ligand>
</feature>
<feature type="binding site" evidence="2">
    <location>
        <position position="435"/>
    </location>
    <ligand>
        <name>a beta-D-glucoside</name>
        <dbReference type="ChEBI" id="CHEBI:22798"/>
    </ligand>
</feature>
<feature type="binding site" evidence="1">
    <location>
        <position position="451"/>
    </location>
    <ligand>
        <name>a beta-D-glucoside</name>
        <dbReference type="ChEBI" id="CHEBI:22798"/>
    </ligand>
</feature>
<feature type="glycosylation site" description="N-linked (GlcNAc...) asparagine" evidence="4">
    <location>
        <position position="2"/>
    </location>
</feature>
<feature type="glycosylation site" description="N-linked (GlcNAc...) asparagine" evidence="4">
    <location>
        <position position="303"/>
    </location>
</feature>
<feature type="glycosylation site" description="N-linked (GlcNAc...) asparagine" evidence="4">
    <location>
        <position position="425"/>
    </location>
</feature>
<keyword id="KW-0903">Direct protein sequencing</keyword>
<keyword id="KW-0325">Glycoprotein</keyword>
<keyword id="KW-0328">Glycosyltransferase</keyword>
<keyword id="KW-0732">Signal</keyword>
<keyword id="KW-0808">Transferase</keyword>
<keyword id="KW-0926">Vacuole</keyword>
<name>AA5GT_DIACA</name>
<dbReference type="EC" id="2.4.1.299" evidence="5"/>
<dbReference type="EMBL" id="AB507446">
    <property type="protein sequence ID" value="BAJ33501.1"/>
    <property type="molecule type" value="mRNA"/>
</dbReference>
<dbReference type="EMBL" id="AB646510">
    <property type="protein sequence ID" value="BAL45928.1"/>
    <property type="molecule type" value="Genomic_DNA"/>
</dbReference>
<dbReference type="SMR" id="E3W9M2"/>
<dbReference type="CAZy" id="GH1">
    <property type="family name" value="Glycoside Hydrolase Family 1"/>
</dbReference>
<dbReference type="GlyCosmos" id="E3W9M2">
    <property type="glycosylation" value="3 sites, No reported glycans"/>
</dbReference>
<dbReference type="KEGG" id="ag:BAJ33501"/>
<dbReference type="BioCyc" id="MetaCyc:MONOMER-17997"/>
<dbReference type="SABIO-RK" id="E3W9M2"/>
<dbReference type="UniPathway" id="UPA00009"/>
<dbReference type="GO" id="GO:0000325">
    <property type="term" value="C:plant-type vacuole"/>
    <property type="evidence" value="ECO:0000314"/>
    <property type="project" value="UniProtKB"/>
</dbReference>
<dbReference type="GO" id="GO:0008422">
    <property type="term" value="F:beta-glucosidase activity"/>
    <property type="evidence" value="ECO:0007669"/>
    <property type="project" value="TreeGrafter"/>
</dbReference>
<dbReference type="GO" id="GO:0102506">
    <property type="term" value="F:cyanidin 3-O-glucoside 5-O-glucosyltransferase (acyl-glucose) activity"/>
    <property type="evidence" value="ECO:0007669"/>
    <property type="project" value="UniProtKB-EC"/>
</dbReference>
<dbReference type="GO" id="GO:0016758">
    <property type="term" value="F:hexosyltransferase activity"/>
    <property type="evidence" value="ECO:0000314"/>
    <property type="project" value="UniProtKB"/>
</dbReference>
<dbReference type="GO" id="GO:0009718">
    <property type="term" value="P:anthocyanin-containing compound biosynthetic process"/>
    <property type="evidence" value="ECO:0000314"/>
    <property type="project" value="UniProtKB"/>
</dbReference>
<dbReference type="GO" id="GO:0005975">
    <property type="term" value="P:carbohydrate metabolic process"/>
    <property type="evidence" value="ECO:0007669"/>
    <property type="project" value="InterPro"/>
</dbReference>
<dbReference type="GO" id="GO:0043473">
    <property type="term" value="P:pigmentation"/>
    <property type="evidence" value="ECO:0000314"/>
    <property type="project" value="UniProtKB"/>
</dbReference>
<dbReference type="FunFam" id="3.20.20.80:FF:000370">
    <property type="entry name" value="Cyanidin 3-O-glucoside 5-O-glucosyltransferase (acyl-glucose)"/>
    <property type="match status" value="1"/>
</dbReference>
<dbReference type="Gene3D" id="3.20.20.80">
    <property type="entry name" value="Glycosidases"/>
    <property type="match status" value="1"/>
</dbReference>
<dbReference type="InterPro" id="IPR001360">
    <property type="entry name" value="Glyco_hydro_1"/>
</dbReference>
<dbReference type="InterPro" id="IPR017853">
    <property type="entry name" value="Glycoside_hydrolase_SF"/>
</dbReference>
<dbReference type="PANTHER" id="PTHR10353:SF29">
    <property type="entry name" value="BETA-GLUCOSIDASE 11"/>
    <property type="match status" value="1"/>
</dbReference>
<dbReference type="PANTHER" id="PTHR10353">
    <property type="entry name" value="GLYCOSYL HYDROLASE"/>
    <property type="match status" value="1"/>
</dbReference>
<dbReference type="Pfam" id="PF00232">
    <property type="entry name" value="Glyco_hydro_1"/>
    <property type="match status" value="1"/>
</dbReference>
<dbReference type="PRINTS" id="PR00131">
    <property type="entry name" value="GLHYDRLASE1"/>
</dbReference>
<dbReference type="SUPFAM" id="SSF51445">
    <property type="entry name" value="(Trans)glycosidases"/>
    <property type="match status" value="1"/>
</dbReference>